<accession>Q1LS40</accession>
<evidence type="ECO:0000255" key="1">
    <source>
        <dbReference type="HAMAP-Rule" id="MF_01208"/>
    </source>
</evidence>
<proteinExistence type="inferred from homology"/>
<keyword id="KW-0328">Glycosyltransferase</keyword>
<keyword id="KW-0460">Magnesium</keyword>
<keyword id="KW-0665">Pyrimidine biosynthesis</keyword>
<keyword id="KW-1185">Reference proteome</keyword>
<keyword id="KW-0808">Transferase</keyword>
<feature type="chain" id="PRO_1000138819" description="Orotate phosphoribosyltransferase">
    <location>
        <begin position="1"/>
        <end position="225"/>
    </location>
</feature>
<feature type="binding site" description="in other chain" evidence="1">
    <location>
        <position position="32"/>
    </location>
    <ligand>
        <name>5-phospho-alpha-D-ribose 1-diphosphate</name>
        <dbReference type="ChEBI" id="CHEBI:58017"/>
        <note>ligand shared between dimeric partners</note>
    </ligand>
</feature>
<feature type="binding site" evidence="1">
    <location>
        <begin position="40"/>
        <end position="41"/>
    </location>
    <ligand>
        <name>orotate</name>
        <dbReference type="ChEBI" id="CHEBI:30839"/>
    </ligand>
</feature>
<feature type="binding site" description="in other chain" evidence="1">
    <location>
        <begin position="78"/>
        <end position="79"/>
    </location>
    <ligand>
        <name>5-phospho-alpha-D-ribose 1-diphosphate</name>
        <dbReference type="ChEBI" id="CHEBI:58017"/>
        <note>ligand shared between dimeric partners</note>
    </ligand>
</feature>
<feature type="binding site" evidence="1">
    <location>
        <position position="104"/>
    </location>
    <ligand>
        <name>5-phospho-alpha-D-ribose 1-diphosphate</name>
        <dbReference type="ChEBI" id="CHEBI:58017"/>
        <note>ligand shared between dimeric partners</note>
    </ligand>
</feature>
<feature type="binding site" description="in other chain" evidence="1">
    <location>
        <position position="105"/>
    </location>
    <ligand>
        <name>5-phospho-alpha-D-ribose 1-diphosphate</name>
        <dbReference type="ChEBI" id="CHEBI:58017"/>
        <note>ligand shared between dimeric partners</note>
    </ligand>
</feature>
<feature type="binding site" evidence="1">
    <location>
        <position position="108"/>
    </location>
    <ligand>
        <name>5-phospho-alpha-D-ribose 1-diphosphate</name>
        <dbReference type="ChEBI" id="CHEBI:58017"/>
        <note>ligand shared between dimeric partners</note>
    </ligand>
</feature>
<feature type="binding site" evidence="1">
    <location>
        <position position="110"/>
    </location>
    <ligand>
        <name>5-phospho-alpha-D-ribose 1-diphosphate</name>
        <dbReference type="ChEBI" id="CHEBI:58017"/>
        <note>ligand shared between dimeric partners</note>
    </ligand>
</feature>
<feature type="binding site" description="in other chain" evidence="1">
    <location>
        <begin position="129"/>
        <end position="137"/>
    </location>
    <ligand>
        <name>5-phospho-alpha-D-ribose 1-diphosphate</name>
        <dbReference type="ChEBI" id="CHEBI:58017"/>
        <note>ligand shared between dimeric partners</note>
    </ligand>
</feature>
<feature type="binding site" evidence="1">
    <location>
        <position position="133"/>
    </location>
    <ligand>
        <name>orotate</name>
        <dbReference type="ChEBI" id="CHEBI:30839"/>
    </ligand>
</feature>
<feature type="binding site" evidence="1">
    <location>
        <position position="161"/>
    </location>
    <ligand>
        <name>orotate</name>
        <dbReference type="ChEBI" id="CHEBI:30839"/>
    </ligand>
</feature>
<name>PYRE_CUPMC</name>
<comment type="function">
    <text evidence="1">Catalyzes the transfer of a ribosyl phosphate group from 5-phosphoribose 1-diphosphate to orotate, leading to the formation of orotidine monophosphate (OMP).</text>
</comment>
<comment type="catalytic activity">
    <reaction evidence="1">
        <text>orotidine 5'-phosphate + diphosphate = orotate + 5-phospho-alpha-D-ribose 1-diphosphate</text>
        <dbReference type="Rhea" id="RHEA:10380"/>
        <dbReference type="ChEBI" id="CHEBI:30839"/>
        <dbReference type="ChEBI" id="CHEBI:33019"/>
        <dbReference type="ChEBI" id="CHEBI:57538"/>
        <dbReference type="ChEBI" id="CHEBI:58017"/>
        <dbReference type="EC" id="2.4.2.10"/>
    </reaction>
</comment>
<comment type="cofactor">
    <cofactor evidence="1">
        <name>Mg(2+)</name>
        <dbReference type="ChEBI" id="CHEBI:18420"/>
    </cofactor>
</comment>
<comment type="pathway">
    <text evidence="1">Pyrimidine metabolism; UMP biosynthesis via de novo pathway; UMP from orotate: step 1/2.</text>
</comment>
<comment type="subunit">
    <text evidence="1">Homodimer.</text>
</comment>
<comment type="similarity">
    <text evidence="1">Belongs to the purine/pyrimidine phosphoribosyltransferase family. PyrE subfamily.</text>
</comment>
<dbReference type="EC" id="2.4.2.10" evidence="1"/>
<dbReference type="EMBL" id="CP000352">
    <property type="protein sequence ID" value="ABF07036.1"/>
    <property type="molecule type" value="Genomic_DNA"/>
</dbReference>
<dbReference type="RefSeq" id="WP_008647201.1">
    <property type="nucleotide sequence ID" value="NC_007973.1"/>
</dbReference>
<dbReference type="SMR" id="Q1LS40"/>
<dbReference type="STRING" id="266264.Rmet_0150"/>
<dbReference type="GeneID" id="60822873"/>
<dbReference type="KEGG" id="rme:Rmet_0150"/>
<dbReference type="eggNOG" id="COG0461">
    <property type="taxonomic scope" value="Bacteria"/>
</dbReference>
<dbReference type="HOGENOM" id="CLU_074878_0_1_4"/>
<dbReference type="UniPathway" id="UPA00070">
    <property type="reaction ID" value="UER00119"/>
</dbReference>
<dbReference type="Proteomes" id="UP000002429">
    <property type="component" value="Chromosome"/>
</dbReference>
<dbReference type="GO" id="GO:0005737">
    <property type="term" value="C:cytoplasm"/>
    <property type="evidence" value="ECO:0007669"/>
    <property type="project" value="TreeGrafter"/>
</dbReference>
<dbReference type="GO" id="GO:0000287">
    <property type="term" value="F:magnesium ion binding"/>
    <property type="evidence" value="ECO:0007669"/>
    <property type="project" value="UniProtKB-UniRule"/>
</dbReference>
<dbReference type="GO" id="GO:0004588">
    <property type="term" value="F:orotate phosphoribosyltransferase activity"/>
    <property type="evidence" value="ECO:0007669"/>
    <property type="project" value="UniProtKB-UniRule"/>
</dbReference>
<dbReference type="GO" id="GO:0006207">
    <property type="term" value="P:'de novo' pyrimidine nucleobase biosynthetic process"/>
    <property type="evidence" value="ECO:0007669"/>
    <property type="project" value="TreeGrafter"/>
</dbReference>
<dbReference type="GO" id="GO:0044205">
    <property type="term" value="P:'de novo' UMP biosynthetic process"/>
    <property type="evidence" value="ECO:0007669"/>
    <property type="project" value="UniProtKB-UniRule"/>
</dbReference>
<dbReference type="GO" id="GO:0046132">
    <property type="term" value="P:pyrimidine ribonucleoside biosynthetic process"/>
    <property type="evidence" value="ECO:0007669"/>
    <property type="project" value="TreeGrafter"/>
</dbReference>
<dbReference type="CDD" id="cd06223">
    <property type="entry name" value="PRTases_typeI"/>
    <property type="match status" value="1"/>
</dbReference>
<dbReference type="FunFam" id="3.40.50.2020:FF:000008">
    <property type="entry name" value="Orotate phosphoribosyltransferase"/>
    <property type="match status" value="1"/>
</dbReference>
<dbReference type="Gene3D" id="3.40.50.2020">
    <property type="match status" value="1"/>
</dbReference>
<dbReference type="HAMAP" id="MF_01208">
    <property type="entry name" value="PyrE"/>
    <property type="match status" value="1"/>
</dbReference>
<dbReference type="InterPro" id="IPR023031">
    <property type="entry name" value="OPRT"/>
</dbReference>
<dbReference type="InterPro" id="IPR004467">
    <property type="entry name" value="Or_phspho_trans_dom"/>
</dbReference>
<dbReference type="InterPro" id="IPR000836">
    <property type="entry name" value="PRibTrfase_dom"/>
</dbReference>
<dbReference type="InterPro" id="IPR029057">
    <property type="entry name" value="PRTase-like"/>
</dbReference>
<dbReference type="NCBIfam" id="TIGR00336">
    <property type="entry name" value="pyrE"/>
    <property type="match status" value="1"/>
</dbReference>
<dbReference type="PANTHER" id="PTHR46683">
    <property type="entry name" value="OROTATE PHOSPHORIBOSYLTRANSFERASE 1-RELATED"/>
    <property type="match status" value="1"/>
</dbReference>
<dbReference type="PANTHER" id="PTHR46683:SF1">
    <property type="entry name" value="OROTATE PHOSPHORIBOSYLTRANSFERASE 1-RELATED"/>
    <property type="match status" value="1"/>
</dbReference>
<dbReference type="Pfam" id="PF00156">
    <property type="entry name" value="Pribosyltran"/>
    <property type="match status" value="1"/>
</dbReference>
<dbReference type="SUPFAM" id="SSF53271">
    <property type="entry name" value="PRTase-like"/>
    <property type="match status" value="1"/>
</dbReference>
<dbReference type="PROSITE" id="PS00103">
    <property type="entry name" value="PUR_PYR_PR_TRANSFER"/>
    <property type="match status" value="1"/>
</dbReference>
<reference key="1">
    <citation type="journal article" date="2010" name="PLoS ONE">
        <title>The complete genome sequence of Cupriavidus metallidurans strain CH34, a master survivalist in harsh and anthropogenic environments.</title>
        <authorList>
            <person name="Janssen P.J."/>
            <person name="Van Houdt R."/>
            <person name="Moors H."/>
            <person name="Monsieurs P."/>
            <person name="Morin N."/>
            <person name="Michaux A."/>
            <person name="Benotmane M.A."/>
            <person name="Leys N."/>
            <person name="Vallaeys T."/>
            <person name="Lapidus A."/>
            <person name="Monchy S."/>
            <person name="Medigue C."/>
            <person name="Taghavi S."/>
            <person name="McCorkle S."/>
            <person name="Dunn J."/>
            <person name="van der Lelie D."/>
            <person name="Mergeay M."/>
        </authorList>
    </citation>
    <scope>NUCLEOTIDE SEQUENCE [LARGE SCALE GENOMIC DNA]</scope>
    <source>
        <strain>ATCC 43123 / DSM 2839 / NBRC 102507 / CH34</strain>
    </source>
</reference>
<organism>
    <name type="scientific">Cupriavidus metallidurans (strain ATCC 43123 / DSM 2839 / NBRC 102507 / CH34)</name>
    <name type="common">Ralstonia metallidurans</name>
    <dbReference type="NCBI Taxonomy" id="266264"/>
    <lineage>
        <taxon>Bacteria</taxon>
        <taxon>Pseudomonadati</taxon>
        <taxon>Pseudomonadota</taxon>
        <taxon>Betaproteobacteria</taxon>
        <taxon>Burkholderiales</taxon>
        <taxon>Burkholderiaceae</taxon>
        <taxon>Cupriavidus</taxon>
    </lineage>
</organism>
<sequence length="225" mass="23821">MTQQTTPDDLSQSFIRFALDAGVLSFGEFVTKAGRKSPYFFNAGLFNQGAMLGQVAQFYAKTLLESGVQFDVLFGPAYKGITLASATAVALAGMGRDVGFSYNRKEAKDHGEGGTLVGAKLQGKVVIIDDVISAGTSVRESMQLIRAAGAEPAAVLIALDRMEKSGTADNIGTHSAVQDVQREYGIPVIAIATLKDLLAYLDASKDPSLGNSREAVAAYRQKYGV</sequence>
<protein>
    <recommendedName>
        <fullName evidence="1">Orotate phosphoribosyltransferase</fullName>
        <shortName evidence="1">OPRT</shortName>
        <shortName evidence="1">OPRTase</shortName>
        <ecNumber evidence="1">2.4.2.10</ecNumber>
    </recommendedName>
</protein>
<gene>
    <name evidence="1" type="primary">pyrE</name>
    <name type="ordered locus">Rmet_0150</name>
</gene>